<dbReference type="EC" id="2.5.1.39" evidence="1"/>
<dbReference type="EMBL" id="AE004969">
    <property type="protein sequence ID" value="AAW89059.1"/>
    <property type="molecule type" value="Genomic_DNA"/>
</dbReference>
<dbReference type="RefSeq" id="WP_010951027.1">
    <property type="nucleotide sequence ID" value="NC_002946.2"/>
</dbReference>
<dbReference type="RefSeq" id="YP_207471.1">
    <property type="nucleotide sequence ID" value="NC_002946.2"/>
</dbReference>
<dbReference type="SMR" id="Q5F9S8"/>
<dbReference type="STRING" id="242231.NGO_0312"/>
<dbReference type="KEGG" id="ngo:NGO_0312"/>
<dbReference type="PATRIC" id="fig|242231.10.peg.382"/>
<dbReference type="HOGENOM" id="CLU_034879_1_0_4"/>
<dbReference type="UniPathway" id="UPA00232"/>
<dbReference type="Proteomes" id="UP000000535">
    <property type="component" value="Chromosome"/>
</dbReference>
<dbReference type="GO" id="GO:0005886">
    <property type="term" value="C:plasma membrane"/>
    <property type="evidence" value="ECO:0007669"/>
    <property type="project" value="UniProtKB-SubCell"/>
</dbReference>
<dbReference type="GO" id="GO:0008412">
    <property type="term" value="F:4-hydroxybenzoate polyprenyltransferase activity"/>
    <property type="evidence" value="ECO:0007669"/>
    <property type="project" value="UniProtKB-UniRule"/>
</dbReference>
<dbReference type="GO" id="GO:0006744">
    <property type="term" value="P:ubiquinone biosynthetic process"/>
    <property type="evidence" value="ECO:0007669"/>
    <property type="project" value="UniProtKB-UniRule"/>
</dbReference>
<dbReference type="CDD" id="cd13959">
    <property type="entry name" value="PT_UbiA_COQ2"/>
    <property type="match status" value="1"/>
</dbReference>
<dbReference type="FunFam" id="1.10.357.140:FF:000002">
    <property type="entry name" value="4-hydroxybenzoate octaprenyltransferase"/>
    <property type="match status" value="1"/>
</dbReference>
<dbReference type="FunFam" id="1.20.120.1780:FF:000001">
    <property type="entry name" value="4-hydroxybenzoate octaprenyltransferase"/>
    <property type="match status" value="1"/>
</dbReference>
<dbReference type="Gene3D" id="1.10.357.140">
    <property type="entry name" value="UbiA prenyltransferase"/>
    <property type="match status" value="1"/>
</dbReference>
<dbReference type="Gene3D" id="1.20.120.1780">
    <property type="entry name" value="UbiA prenyltransferase"/>
    <property type="match status" value="1"/>
</dbReference>
<dbReference type="HAMAP" id="MF_01635">
    <property type="entry name" value="UbiA"/>
    <property type="match status" value="1"/>
</dbReference>
<dbReference type="InterPro" id="IPR006370">
    <property type="entry name" value="HB_polyprenyltransferase-like"/>
</dbReference>
<dbReference type="InterPro" id="IPR039653">
    <property type="entry name" value="Prenyltransferase"/>
</dbReference>
<dbReference type="InterPro" id="IPR000537">
    <property type="entry name" value="UbiA_prenyltransferase"/>
</dbReference>
<dbReference type="InterPro" id="IPR030470">
    <property type="entry name" value="UbiA_prenylTrfase_CS"/>
</dbReference>
<dbReference type="InterPro" id="IPR044878">
    <property type="entry name" value="UbiA_sf"/>
</dbReference>
<dbReference type="NCBIfam" id="TIGR01474">
    <property type="entry name" value="ubiA_proteo"/>
    <property type="match status" value="1"/>
</dbReference>
<dbReference type="PANTHER" id="PTHR11048:SF28">
    <property type="entry name" value="4-HYDROXYBENZOATE POLYPRENYLTRANSFERASE, MITOCHONDRIAL"/>
    <property type="match status" value="1"/>
</dbReference>
<dbReference type="PANTHER" id="PTHR11048">
    <property type="entry name" value="PRENYLTRANSFERASES"/>
    <property type="match status" value="1"/>
</dbReference>
<dbReference type="Pfam" id="PF01040">
    <property type="entry name" value="UbiA"/>
    <property type="match status" value="1"/>
</dbReference>
<dbReference type="PROSITE" id="PS00943">
    <property type="entry name" value="UBIA"/>
    <property type="match status" value="1"/>
</dbReference>
<comment type="function">
    <text evidence="1">Catalyzes the prenylation of para-hydroxybenzoate (PHB) with an all-trans polyprenyl group. Mediates the second step in the final reaction sequence of ubiquinone-8 (UQ-8) biosynthesis, which is the condensation of the polyisoprenoid side chain with PHB, generating the first membrane-bound Q intermediate 3-octaprenyl-4-hydroxybenzoate.</text>
</comment>
<comment type="catalytic activity">
    <reaction evidence="1">
        <text>all-trans-octaprenyl diphosphate + 4-hydroxybenzoate = 4-hydroxy-3-(all-trans-octaprenyl)benzoate + diphosphate</text>
        <dbReference type="Rhea" id="RHEA:27782"/>
        <dbReference type="ChEBI" id="CHEBI:1617"/>
        <dbReference type="ChEBI" id="CHEBI:17879"/>
        <dbReference type="ChEBI" id="CHEBI:33019"/>
        <dbReference type="ChEBI" id="CHEBI:57711"/>
        <dbReference type="EC" id="2.5.1.39"/>
    </reaction>
</comment>
<comment type="cofactor">
    <cofactor evidence="1">
        <name>Mg(2+)</name>
        <dbReference type="ChEBI" id="CHEBI:18420"/>
    </cofactor>
</comment>
<comment type="pathway">
    <text evidence="1">Cofactor biosynthesis; ubiquinone biosynthesis.</text>
</comment>
<comment type="subcellular location">
    <subcellularLocation>
        <location evidence="1">Cell inner membrane</location>
        <topology evidence="1">Multi-pass membrane protein</topology>
    </subcellularLocation>
</comment>
<comment type="similarity">
    <text evidence="1">Belongs to the UbiA prenyltransferase family.</text>
</comment>
<accession>Q5F9S8</accession>
<reference key="1">
    <citation type="submission" date="2003-03" db="EMBL/GenBank/DDBJ databases">
        <title>The complete genome sequence of Neisseria gonorrhoeae.</title>
        <authorList>
            <person name="Lewis L.A."/>
            <person name="Gillaspy A.F."/>
            <person name="McLaughlin R.E."/>
            <person name="Gipson M."/>
            <person name="Ducey T.F."/>
            <person name="Ownbey T."/>
            <person name="Hartman K."/>
            <person name="Nydick C."/>
            <person name="Carson M.B."/>
            <person name="Vaughn J."/>
            <person name="Thomson C."/>
            <person name="Song L."/>
            <person name="Lin S."/>
            <person name="Yuan X."/>
            <person name="Najar F."/>
            <person name="Zhan M."/>
            <person name="Ren Q."/>
            <person name="Zhu H."/>
            <person name="Qi S."/>
            <person name="Kenton S.M."/>
            <person name="Lai H."/>
            <person name="White J.D."/>
            <person name="Clifton S."/>
            <person name="Roe B.A."/>
            <person name="Dyer D.W."/>
        </authorList>
    </citation>
    <scope>NUCLEOTIDE SEQUENCE [LARGE SCALE GENOMIC DNA]</scope>
    <source>
        <strain>ATCC 700825 / FA 1090</strain>
    </source>
</reference>
<proteinExistence type="inferred from homology"/>
<evidence type="ECO:0000255" key="1">
    <source>
        <dbReference type="HAMAP-Rule" id="MF_01635"/>
    </source>
</evidence>
<name>UBIA_NEIG1</name>
<organism>
    <name type="scientific">Neisseria gonorrhoeae (strain ATCC 700825 / FA 1090)</name>
    <dbReference type="NCBI Taxonomy" id="242231"/>
    <lineage>
        <taxon>Bacteria</taxon>
        <taxon>Pseudomonadati</taxon>
        <taxon>Pseudomonadota</taxon>
        <taxon>Betaproteobacteria</taxon>
        <taxon>Neisseriales</taxon>
        <taxon>Neisseriaceae</taxon>
        <taxon>Neisseria</taxon>
    </lineage>
</organism>
<gene>
    <name evidence="1" type="primary">ubiA</name>
    <name type="ordered locus">NGO_0312</name>
</gene>
<sequence length="296" mass="33223">MNLKSPLFLRLSDRLDVYIRLMRADKPIGTLLLLWPTYWALWLASDGIPDLAVLAAFTIGTFLMRSAGCVINDFADRDFDGAVERTKNRPFAQGRVKKKEALLLTAFLCLLAALCLIPLNHLTWLMSLPALFLALTYPFTKRFFPIPQFYLGFAFSFGIPMAFAAVGNSVPVEAWILFAANVLWTLAYDTVYAMADKEDDLKIGIKTSAVTFGRYDIAAVMLCHGGFTLLMAVLGAVIGAAWAYWTAIPIVLLLQYRQYAAIKSRVRQICFETFLANNRIGWVWFAAIFAHTFFAK</sequence>
<protein>
    <recommendedName>
        <fullName evidence="1">4-hydroxybenzoate octaprenyltransferase</fullName>
        <ecNumber evidence="1">2.5.1.39</ecNumber>
    </recommendedName>
    <alternativeName>
        <fullName evidence="1">4-HB polyprenyltransferase</fullName>
    </alternativeName>
</protein>
<keyword id="KW-0997">Cell inner membrane</keyword>
<keyword id="KW-1003">Cell membrane</keyword>
<keyword id="KW-0460">Magnesium</keyword>
<keyword id="KW-0472">Membrane</keyword>
<keyword id="KW-1185">Reference proteome</keyword>
<keyword id="KW-0808">Transferase</keyword>
<keyword id="KW-0812">Transmembrane</keyword>
<keyword id="KW-1133">Transmembrane helix</keyword>
<keyword id="KW-0831">Ubiquinone biosynthesis</keyword>
<feature type="chain" id="PRO_0000262808" description="4-hydroxybenzoate octaprenyltransferase">
    <location>
        <begin position="1"/>
        <end position="296"/>
    </location>
</feature>
<feature type="transmembrane region" description="Helical" evidence="1">
    <location>
        <begin position="28"/>
        <end position="48"/>
    </location>
</feature>
<feature type="transmembrane region" description="Helical" evidence="1">
    <location>
        <begin position="51"/>
        <end position="71"/>
    </location>
</feature>
<feature type="transmembrane region" description="Helical" evidence="1">
    <location>
        <begin position="102"/>
        <end position="122"/>
    </location>
</feature>
<feature type="transmembrane region" description="Helical" evidence="1">
    <location>
        <begin position="143"/>
        <end position="163"/>
    </location>
</feature>
<feature type="transmembrane region" description="Helical" evidence="1">
    <location>
        <begin position="174"/>
        <end position="194"/>
    </location>
</feature>
<feature type="transmembrane region" description="Helical" evidence="1">
    <location>
        <begin position="212"/>
        <end position="232"/>
    </location>
</feature>
<feature type="transmembrane region" description="Helical" evidence="1">
    <location>
        <begin position="233"/>
        <end position="253"/>
    </location>
</feature>
<feature type="transmembrane region" description="Helical" evidence="1">
    <location>
        <begin position="274"/>
        <end position="294"/>
    </location>
</feature>